<protein>
    <recommendedName>
        <fullName evidence="1">Large ribosomal subunit protein uL5</fullName>
    </recommendedName>
    <alternativeName>
        <fullName evidence="2">50S ribosomal protein L5</fullName>
    </alternativeName>
</protein>
<sequence>MMPRLQEKYEKEVVSALMDKFGYKNIMEVPKLEKIVINMGVGEAKENQKSLEAAVEDLAKITGQKPILTKAKKSVANFKIREDMPLGCKVTLRKQNMYEFADKLINVALPRVRDFSGVSSKSFDGRGNYAIGIKEQLIFPEIEFDKIDKIRGMDIIFVTTAKTDEEARELLRFLGMPFAR</sequence>
<dbReference type="EMBL" id="CP000727">
    <property type="protein sequence ID" value="ABS38042.1"/>
    <property type="molecule type" value="Genomic_DNA"/>
</dbReference>
<dbReference type="EMBL" id="AM412317">
    <property type="protein sequence ID" value="CAL85029.1"/>
    <property type="molecule type" value="Genomic_DNA"/>
</dbReference>
<dbReference type="RefSeq" id="WP_003357534.1">
    <property type="nucleotide sequence ID" value="NC_009698.1"/>
</dbReference>
<dbReference type="RefSeq" id="YP_001255950.1">
    <property type="nucleotide sequence ID" value="NC_009495.1"/>
</dbReference>
<dbReference type="RefSeq" id="YP_001389191.1">
    <property type="nucleotide sequence ID" value="NC_009698.1"/>
</dbReference>
<dbReference type="SMR" id="A5I7J4"/>
<dbReference type="GeneID" id="5187726"/>
<dbReference type="KEGG" id="cbh:CLC_3413"/>
<dbReference type="KEGG" id="cbo:CBO3469"/>
<dbReference type="PATRIC" id="fig|413999.7.peg.3445"/>
<dbReference type="HOGENOM" id="CLU_061015_2_1_9"/>
<dbReference type="PRO" id="PR:A5I7J4"/>
<dbReference type="Proteomes" id="UP000001986">
    <property type="component" value="Chromosome"/>
</dbReference>
<dbReference type="GO" id="GO:0022625">
    <property type="term" value="C:cytosolic large ribosomal subunit"/>
    <property type="evidence" value="ECO:0000318"/>
    <property type="project" value="GO_Central"/>
</dbReference>
<dbReference type="GO" id="GO:0003723">
    <property type="term" value="F:RNA binding"/>
    <property type="evidence" value="ECO:0000318"/>
    <property type="project" value="GO_Central"/>
</dbReference>
<dbReference type="GO" id="GO:0019843">
    <property type="term" value="F:rRNA binding"/>
    <property type="evidence" value="ECO:0007669"/>
    <property type="project" value="UniProtKB-UniRule"/>
</dbReference>
<dbReference type="GO" id="GO:0003735">
    <property type="term" value="F:structural constituent of ribosome"/>
    <property type="evidence" value="ECO:0000318"/>
    <property type="project" value="GO_Central"/>
</dbReference>
<dbReference type="GO" id="GO:0000049">
    <property type="term" value="F:tRNA binding"/>
    <property type="evidence" value="ECO:0007669"/>
    <property type="project" value="UniProtKB-UniRule"/>
</dbReference>
<dbReference type="GO" id="GO:0006412">
    <property type="term" value="P:translation"/>
    <property type="evidence" value="ECO:0000318"/>
    <property type="project" value="GO_Central"/>
</dbReference>
<dbReference type="FunFam" id="3.30.1440.10:FF:000001">
    <property type="entry name" value="50S ribosomal protein L5"/>
    <property type="match status" value="1"/>
</dbReference>
<dbReference type="Gene3D" id="3.30.1440.10">
    <property type="match status" value="1"/>
</dbReference>
<dbReference type="HAMAP" id="MF_01333_B">
    <property type="entry name" value="Ribosomal_uL5_B"/>
    <property type="match status" value="1"/>
</dbReference>
<dbReference type="InterPro" id="IPR002132">
    <property type="entry name" value="Ribosomal_uL5"/>
</dbReference>
<dbReference type="InterPro" id="IPR020930">
    <property type="entry name" value="Ribosomal_uL5_bac-type"/>
</dbReference>
<dbReference type="InterPro" id="IPR031309">
    <property type="entry name" value="Ribosomal_uL5_C"/>
</dbReference>
<dbReference type="InterPro" id="IPR020929">
    <property type="entry name" value="Ribosomal_uL5_CS"/>
</dbReference>
<dbReference type="InterPro" id="IPR022803">
    <property type="entry name" value="Ribosomal_uL5_dom_sf"/>
</dbReference>
<dbReference type="InterPro" id="IPR031310">
    <property type="entry name" value="Ribosomal_uL5_N"/>
</dbReference>
<dbReference type="NCBIfam" id="NF000585">
    <property type="entry name" value="PRK00010.1"/>
    <property type="match status" value="1"/>
</dbReference>
<dbReference type="PANTHER" id="PTHR11994">
    <property type="entry name" value="60S RIBOSOMAL PROTEIN L11-RELATED"/>
    <property type="match status" value="1"/>
</dbReference>
<dbReference type="Pfam" id="PF00281">
    <property type="entry name" value="Ribosomal_L5"/>
    <property type="match status" value="1"/>
</dbReference>
<dbReference type="Pfam" id="PF00673">
    <property type="entry name" value="Ribosomal_L5_C"/>
    <property type="match status" value="1"/>
</dbReference>
<dbReference type="PIRSF" id="PIRSF002161">
    <property type="entry name" value="Ribosomal_L5"/>
    <property type="match status" value="1"/>
</dbReference>
<dbReference type="SUPFAM" id="SSF55282">
    <property type="entry name" value="RL5-like"/>
    <property type="match status" value="1"/>
</dbReference>
<dbReference type="PROSITE" id="PS00358">
    <property type="entry name" value="RIBOSOMAL_L5"/>
    <property type="match status" value="1"/>
</dbReference>
<proteinExistence type="inferred from homology"/>
<gene>
    <name evidence="1" type="primary">rplE</name>
    <name type="ordered locus">CBO3469</name>
    <name type="ordered locus">CLC_3413</name>
</gene>
<name>RL5_CLOBH</name>
<accession>A5I7J4</accession>
<accession>A7G8S6</accession>
<organism>
    <name type="scientific">Clostridium botulinum (strain Hall / ATCC 3502 / NCTC 13319 / Type A)</name>
    <dbReference type="NCBI Taxonomy" id="441771"/>
    <lineage>
        <taxon>Bacteria</taxon>
        <taxon>Bacillati</taxon>
        <taxon>Bacillota</taxon>
        <taxon>Clostridia</taxon>
        <taxon>Eubacteriales</taxon>
        <taxon>Clostridiaceae</taxon>
        <taxon>Clostridium</taxon>
    </lineage>
</organism>
<reference key="1">
    <citation type="journal article" date="2007" name="Genome Res.">
        <title>Genome sequence of a proteolytic (Group I) Clostridium botulinum strain Hall A and comparative analysis of the clostridial genomes.</title>
        <authorList>
            <person name="Sebaihia M."/>
            <person name="Peck M.W."/>
            <person name="Minton N.P."/>
            <person name="Thomson N.R."/>
            <person name="Holden M.T.G."/>
            <person name="Mitchell W.J."/>
            <person name="Carter A.T."/>
            <person name="Bentley S.D."/>
            <person name="Mason D.R."/>
            <person name="Crossman L."/>
            <person name="Paul C.J."/>
            <person name="Ivens A."/>
            <person name="Wells-Bennik M.H.J."/>
            <person name="Davis I.J."/>
            <person name="Cerdeno-Tarraga A.M."/>
            <person name="Churcher C."/>
            <person name="Quail M.A."/>
            <person name="Chillingworth T."/>
            <person name="Feltwell T."/>
            <person name="Fraser A."/>
            <person name="Goodhead I."/>
            <person name="Hance Z."/>
            <person name="Jagels K."/>
            <person name="Larke N."/>
            <person name="Maddison M."/>
            <person name="Moule S."/>
            <person name="Mungall K."/>
            <person name="Norbertczak H."/>
            <person name="Rabbinowitsch E."/>
            <person name="Sanders M."/>
            <person name="Simmonds M."/>
            <person name="White B."/>
            <person name="Whithead S."/>
            <person name="Parkhill J."/>
        </authorList>
    </citation>
    <scope>NUCLEOTIDE SEQUENCE [LARGE SCALE GENOMIC DNA]</scope>
    <source>
        <strain>Hall / ATCC 3502 / NCTC 13319 / Type A</strain>
    </source>
</reference>
<reference key="2">
    <citation type="journal article" date="2007" name="PLoS ONE">
        <title>Analysis of the neurotoxin complex genes in Clostridium botulinum A1-A4 and B1 strains: BoNT/A3, /Ba4 and /B1 clusters are located within plasmids.</title>
        <authorList>
            <person name="Smith T.J."/>
            <person name="Hill K.K."/>
            <person name="Foley B.T."/>
            <person name="Detter J.C."/>
            <person name="Munk A.C."/>
            <person name="Bruce D.C."/>
            <person name="Doggett N.A."/>
            <person name="Smith L.A."/>
            <person name="Marks J.D."/>
            <person name="Xie G."/>
            <person name="Brettin T.S."/>
        </authorList>
    </citation>
    <scope>NUCLEOTIDE SEQUENCE [LARGE SCALE GENOMIC DNA]</scope>
    <source>
        <strain>Hall / ATCC 3502 / NCTC 13319 / Type A</strain>
    </source>
</reference>
<keyword id="KW-1185">Reference proteome</keyword>
<keyword id="KW-0687">Ribonucleoprotein</keyword>
<keyword id="KW-0689">Ribosomal protein</keyword>
<keyword id="KW-0694">RNA-binding</keyword>
<keyword id="KW-0699">rRNA-binding</keyword>
<keyword id="KW-0820">tRNA-binding</keyword>
<feature type="chain" id="PRO_1000052720" description="Large ribosomal subunit protein uL5">
    <location>
        <begin position="1"/>
        <end position="180"/>
    </location>
</feature>
<comment type="function">
    <text evidence="1">This is one of the proteins that bind and probably mediate the attachment of the 5S RNA into the large ribosomal subunit, where it forms part of the central protuberance. In the 70S ribosome it contacts protein S13 of the 30S subunit (bridge B1b), connecting the 2 subunits; this bridge is implicated in subunit movement. Contacts the P site tRNA; the 5S rRNA and some of its associated proteins might help stabilize positioning of ribosome-bound tRNAs.</text>
</comment>
<comment type="subunit">
    <text evidence="1">Part of the 50S ribosomal subunit; part of the 5S rRNA/L5/L18/L25 subcomplex. Contacts the 5S rRNA and the P site tRNA. Forms a bridge to the 30S subunit in the 70S ribosome.</text>
</comment>
<comment type="similarity">
    <text evidence="1">Belongs to the universal ribosomal protein uL5 family.</text>
</comment>
<evidence type="ECO:0000255" key="1">
    <source>
        <dbReference type="HAMAP-Rule" id="MF_01333"/>
    </source>
</evidence>
<evidence type="ECO:0000305" key="2"/>